<name>RLMN_AKKM8</name>
<sequence>MPPLPLITAQTEEKLLAFLTEHGHTKFRTQQVLDWVWRKRVTTFDAMSNLPPALKNLLAENFRFHTPEIVEIHGSADTTRKFLTKMEDGSLVESVIIPAAAAENGEKSERVTLCVSSQVGCAFGCKFCASGLLGLKRHLTTGEIIGQILSAEAIAGKRVNNIVFMGMGEPLSNFDNLADALEIITSHRGLEIGARHITISTSGFVPGLKKLAAYPRQIRLAVSLHGATDEVRDQIMPVNKKWPLSQLIPALEEWNRGRNQMPTLEYILIRDINDSPKDASHLVRIAKRLHAKVNLIPYNTVEGLPWKRPSEERCRSFRDAVHKARIPVTMRYEKGHDINAACGQLRLRKEQEKSGKTSR</sequence>
<dbReference type="EC" id="2.1.1.192" evidence="1"/>
<dbReference type="EMBL" id="CP001071">
    <property type="protein sequence ID" value="ACD04264.1"/>
    <property type="molecule type" value="Genomic_DNA"/>
</dbReference>
<dbReference type="RefSeq" id="WP_012419479.1">
    <property type="nucleotide sequence ID" value="NZ_CP071807.1"/>
</dbReference>
<dbReference type="SMR" id="B2UNF2"/>
<dbReference type="STRING" id="349741.Amuc_0426"/>
<dbReference type="PaxDb" id="349741-Amuc_0426"/>
<dbReference type="GeneID" id="60879891"/>
<dbReference type="KEGG" id="amu:Amuc_0426"/>
<dbReference type="eggNOG" id="COG0820">
    <property type="taxonomic scope" value="Bacteria"/>
</dbReference>
<dbReference type="HOGENOM" id="CLU_029101_2_0_0"/>
<dbReference type="OrthoDB" id="9793973at2"/>
<dbReference type="BioCyc" id="AMUC349741:G1GBX-472-MONOMER"/>
<dbReference type="Proteomes" id="UP000001031">
    <property type="component" value="Chromosome"/>
</dbReference>
<dbReference type="GO" id="GO:0005737">
    <property type="term" value="C:cytoplasm"/>
    <property type="evidence" value="ECO:0007669"/>
    <property type="project" value="UniProtKB-SubCell"/>
</dbReference>
<dbReference type="GO" id="GO:0051539">
    <property type="term" value="F:4 iron, 4 sulfur cluster binding"/>
    <property type="evidence" value="ECO:0007669"/>
    <property type="project" value="UniProtKB-UniRule"/>
</dbReference>
<dbReference type="GO" id="GO:0046872">
    <property type="term" value="F:metal ion binding"/>
    <property type="evidence" value="ECO:0007669"/>
    <property type="project" value="UniProtKB-KW"/>
</dbReference>
<dbReference type="GO" id="GO:0070040">
    <property type="term" value="F:rRNA (adenine(2503)-C2-)-methyltransferase activity"/>
    <property type="evidence" value="ECO:0007669"/>
    <property type="project" value="UniProtKB-UniRule"/>
</dbReference>
<dbReference type="GO" id="GO:0019843">
    <property type="term" value="F:rRNA binding"/>
    <property type="evidence" value="ECO:0007669"/>
    <property type="project" value="UniProtKB-UniRule"/>
</dbReference>
<dbReference type="GO" id="GO:0002935">
    <property type="term" value="F:tRNA (adenine(37)-C2)-methyltransferase activity"/>
    <property type="evidence" value="ECO:0007669"/>
    <property type="project" value="UniProtKB-UniRule"/>
</dbReference>
<dbReference type="GO" id="GO:0000049">
    <property type="term" value="F:tRNA binding"/>
    <property type="evidence" value="ECO:0007669"/>
    <property type="project" value="UniProtKB-UniRule"/>
</dbReference>
<dbReference type="GO" id="GO:0070475">
    <property type="term" value="P:rRNA base methylation"/>
    <property type="evidence" value="ECO:0007669"/>
    <property type="project" value="UniProtKB-UniRule"/>
</dbReference>
<dbReference type="GO" id="GO:0030488">
    <property type="term" value="P:tRNA methylation"/>
    <property type="evidence" value="ECO:0007669"/>
    <property type="project" value="UniProtKB-UniRule"/>
</dbReference>
<dbReference type="CDD" id="cd01335">
    <property type="entry name" value="Radical_SAM"/>
    <property type="match status" value="1"/>
</dbReference>
<dbReference type="FunFam" id="3.20.20.70:FF:000014">
    <property type="entry name" value="Probable dual-specificity RNA methyltransferase RlmN"/>
    <property type="match status" value="1"/>
</dbReference>
<dbReference type="Gene3D" id="1.10.150.530">
    <property type="match status" value="1"/>
</dbReference>
<dbReference type="Gene3D" id="3.20.20.70">
    <property type="entry name" value="Aldolase class I"/>
    <property type="match status" value="1"/>
</dbReference>
<dbReference type="HAMAP" id="MF_01849">
    <property type="entry name" value="RNA_methyltr_RlmN"/>
    <property type="match status" value="1"/>
</dbReference>
<dbReference type="InterPro" id="IPR013785">
    <property type="entry name" value="Aldolase_TIM"/>
</dbReference>
<dbReference type="InterPro" id="IPR006638">
    <property type="entry name" value="Elp3/MiaA/NifB-like_rSAM"/>
</dbReference>
<dbReference type="InterPro" id="IPR040072">
    <property type="entry name" value="Methyltransferase_A"/>
</dbReference>
<dbReference type="InterPro" id="IPR048641">
    <property type="entry name" value="RlmN_N"/>
</dbReference>
<dbReference type="InterPro" id="IPR027492">
    <property type="entry name" value="RNA_MTrfase_RlmN"/>
</dbReference>
<dbReference type="InterPro" id="IPR004383">
    <property type="entry name" value="rRNA_lsu_MTrfase_RlmN/Cfr"/>
</dbReference>
<dbReference type="InterPro" id="IPR007197">
    <property type="entry name" value="rSAM"/>
</dbReference>
<dbReference type="NCBIfam" id="TIGR00048">
    <property type="entry name" value="rRNA_mod_RlmN"/>
    <property type="match status" value="1"/>
</dbReference>
<dbReference type="PANTHER" id="PTHR30544">
    <property type="entry name" value="23S RRNA METHYLTRANSFERASE"/>
    <property type="match status" value="1"/>
</dbReference>
<dbReference type="PANTHER" id="PTHR30544:SF5">
    <property type="entry name" value="RADICAL SAM CORE DOMAIN-CONTAINING PROTEIN"/>
    <property type="match status" value="1"/>
</dbReference>
<dbReference type="Pfam" id="PF04055">
    <property type="entry name" value="Radical_SAM"/>
    <property type="match status" value="1"/>
</dbReference>
<dbReference type="Pfam" id="PF21016">
    <property type="entry name" value="RlmN_N"/>
    <property type="match status" value="1"/>
</dbReference>
<dbReference type="PIRSF" id="PIRSF006004">
    <property type="entry name" value="CHP00048"/>
    <property type="match status" value="1"/>
</dbReference>
<dbReference type="SFLD" id="SFLDF00275">
    <property type="entry name" value="adenosine_C2_methyltransferase"/>
    <property type="match status" value="1"/>
</dbReference>
<dbReference type="SFLD" id="SFLDS00029">
    <property type="entry name" value="Radical_SAM"/>
    <property type="match status" value="1"/>
</dbReference>
<dbReference type="SMART" id="SM00729">
    <property type="entry name" value="Elp3"/>
    <property type="match status" value="1"/>
</dbReference>
<dbReference type="SUPFAM" id="SSF102114">
    <property type="entry name" value="Radical SAM enzymes"/>
    <property type="match status" value="1"/>
</dbReference>
<dbReference type="PROSITE" id="PS51918">
    <property type="entry name" value="RADICAL_SAM"/>
    <property type="match status" value="1"/>
</dbReference>
<reference key="1">
    <citation type="journal article" date="2011" name="PLoS ONE">
        <title>The genome of Akkermansia muciniphila, a dedicated intestinal mucin degrader, and its use in exploring intestinal metagenomes.</title>
        <authorList>
            <person name="van Passel M.W."/>
            <person name="Kant R."/>
            <person name="Zoetendal E.G."/>
            <person name="Plugge C.M."/>
            <person name="Derrien M."/>
            <person name="Malfatti S.A."/>
            <person name="Chain P.S."/>
            <person name="Woyke T."/>
            <person name="Palva A."/>
            <person name="de Vos W.M."/>
            <person name="Smidt H."/>
        </authorList>
    </citation>
    <scope>NUCLEOTIDE SEQUENCE [LARGE SCALE GENOMIC DNA]</scope>
    <source>
        <strain>ATCC BAA-835 / DSM 22959 / JCM 33894 / BCRC 81048 / CCUG 64013 / CIP 107961 / Muc</strain>
    </source>
</reference>
<accession>B2UNF2</accession>
<feature type="chain" id="PRO_0000350007" description="Probable dual-specificity RNA methyltransferase RlmN">
    <location>
        <begin position="1"/>
        <end position="359"/>
    </location>
</feature>
<feature type="domain" description="Radical SAM core" evidence="2">
    <location>
        <begin position="107"/>
        <end position="337"/>
    </location>
</feature>
<feature type="active site" description="Proton acceptor" evidence="1">
    <location>
        <position position="93"/>
    </location>
</feature>
<feature type="active site" description="S-methylcysteine intermediate" evidence="1">
    <location>
        <position position="342"/>
    </location>
</feature>
<feature type="binding site" evidence="1">
    <location>
        <position position="121"/>
    </location>
    <ligand>
        <name>[4Fe-4S] cluster</name>
        <dbReference type="ChEBI" id="CHEBI:49883"/>
        <note>4Fe-4S-S-AdoMet</note>
    </ligand>
</feature>
<feature type="binding site" evidence="1">
    <location>
        <position position="125"/>
    </location>
    <ligand>
        <name>[4Fe-4S] cluster</name>
        <dbReference type="ChEBI" id="CHEBI:49883"/>
        <note>4Fe-4S-S-AdoMet</note>
    </ligand>
</feature>
<feature type="binding site" evidence="1">
    <location>
        <position position="128"/>
    </location>
    <ligand>
        <name>[4Fe-4S] cluster</name>
        <dbReference type="ChEBI" id="CHEBI:49883"/>
        <note>4Fe-4S-S-AdoMet</note>
    </ligand>
</feature>
<feature type="binding site" evidence="1">
    <location>
        <begin position="168"/>
        <end position="169"/>
    </location>
    <ligand>
        <name>S-adenosyl-L-methionine</name>
        <dbReference type="ChEBI" id="CHEBI:59789"/>
    </ligand>
</feature>
<feature type="binding site" evidence="1">
    <location>
        <position position="200"/>
    </location>
    <ligand>
        <name>S-adenosyl-L-methionine</name>
        <dbReference type="ChEBI" id="CHEBI:59789"/>
    </ligand>
</feature>
<feature type="binding site" evidence="1">
    <location>
        <begin position="223"/>
        <end position="225"/>
    </location>
    <ligand>
        <name>S-adenosyl-L-methionine</name>
        <dbReference type="ChEBI" id="CHEBI:59789"/>
    </ligand>
</feature>
<feature type="binding site" evidence="1">
    <location>
        <position position="299"/>
    </location>
    <ligand>
        <name>S-adenosyl-L-methionine</name>
        <dbReference type="ChEBI" id="CHEBI:59789"/>
    </ligand>
</feature>
<feature type="disulfide bond" description="(transient)" evidence="1">
    <location>
        <begin position="114"/>
        <end position="342"/>
    </location>
</feature>
<proteinExistence type="inferred from homology"/>
<organism>
    <name type="scientific">Akkermansia muciniphila (strain ATCC BAA-835 / DSM 22959 / JCM 33894 / BCRC 81048 / CCUG 64013 / CIP 107961 / Muc)</name>
    <dbReference type="NCBI Taxonomy" id="349741"/>
    <lineage>
        <taxon>Bacteria</taxon>
        <taxon>Pseudomonadati</taxon>
        <taxon>Verrucomicrobiota</taxon>
        <taxon>Verrucomicrobiia</taxon>
        <taxon>Verrucomicrobiales</taxon>
        <taxon>Akkermansiaceae</taxon>
        <taxon>Akkermansia</taxon>
    </lineage>
</organism>
<protein>
    <recommendedName>
        <fullName evidence="1">Probable dual-specificity RNA methyltransferase RlmN</fullName>
        <ecNumber evidence="1">2.1.1.192</ecNumber>
    </recommendedName>
    <alternativeName>
        <fullName evidence="1">23S rRNA (adenine(2503)-C(2))-methyltransferase</fullName>
    </alternativeName>
    <alternativeName>
        <fullName evidence="1">23S rRNA m2A2503 methyltransferase</fullName>
    </alternativeName>
    <alternativeName>
        <fullName evidence="1">Ribosomal RNA large subunit methyltransferase N</fullName>
    </alternativeName>
    <alternativeName>
        <fullName evidence="1">tRNA (adenine(37)-C(2))-methyltransferase</fullName>
    </alternativeName>
    <alternativeName>
        <fullName evidence="1">tRNA m2A37 methyltransferase</fullName>
    </alternativeName>
</protein>
<comment type="function">
    <text evidence="1">Specifically methylates position 2 of adenine 2503 in 23S rRNA and position 2 of adenine 37 in tRNAs.</text>
</comment>
<comment type="catalytic activity">
    <reaction evidence="1">
        <text>adenosine(2503) in 23S rRNA + 2 reduced [2Fe-2S]-[ferredoxin] + 2 S-adenosyl-L-methionine = 2-methyladenosine(2503) in 23S rRNA + 5'-deoxyadenosine + L-methionine + 2 oxidized [2Fe-2S]-[ferredoxin] + S-adenosyl-L-homocysteine</text>
        <dbReference type="Rhea" id="RHEA:42916"/>
        <dbReference type="Rhea" id="RHEA-COMP:10000"/>
        <dbReference type="Rhea" id="RHEA-COMP:10001"/>
        <dbReference type="Rhea" id="RHEA-COMP:10152"/>
        <dbReference type="Rhea" id="RHEA-COMP:10282"/>
        <dbReference type="ChEBI" id="CHEBI:17319"/>
        <dbReference type="ChEBI" id="CHEBI:33737"/>
        <dbReference type="ChEBI" id="CHEBI:33738"/>
        <dbReference type="ChEBI" id="CHEBI:57844"/>
        <dbReference type="ChEBI" id="CHEBI:57856"/>
        <dbReference type="ChEBI" id="CHEBI:59789"/>
        <dbReference type="ChEBI" id="CHEBI:74411"/>
        <dbReference type="ChEBI" id="CHEBI:74497"/>
        <dbReference type="EC" id="2.1.1.192"/>
    </reaction>
</comment>
<comment type="catalytic activity">
    <reaction evidence="1">
        <text>adenosine(37) in tRNA + 2 reduced [2Fe-2S]-[ferredoxin] + 2 S-adenosyl-L-methionine = 2-methyladenosine(37) in tRNA + 5'-deoxyadenosine + L-methionine + 2 oxidized [2Fe-2S]-[ferredoxin] + S-adenosyl-L-homocysteine</text>
        <dbReference type="Rhea" id="RHEA:43332"/>
        <dbReference type="Rhea" id="RHEA-COMP:10000"/>
        <dbReference type="Rhea" id="RHEA-COMP:10001"/>
        <dbReference type="Rhea" id="RHEA-COMP:10162"/>
        <dbReference type="Rhea" id="RHEA-COMP:10485"/>
        <dbReference type="ChEBI" id="CHEBI:17319"/>
        <dbReference type="ChEBI" id="CHEBI:33737"/>
        <dbReference type="ChEBI" id="CHEBI:33738"/>
        <dbReference type="ChEBI" id="CHEBI:57844"/>
        <dbReference type="ChEBI" id="CHEBI:57856"/>
        <dbReference type="ChEBI" id="CHEBI:59789"/>
        <dbReference type="ChEBI" id="CHEBI:74411"/>
        <dbReference type="ChEBI" id="CHEBI:74497"/>
        <dbReference type="EC" id="2.1.1.192"/>
    </reaction>
</comment>
<comment type="cofactor">
    <cofactor evidence="1">
        <name>[4Fe-4S] cluster</name>
        <dbReference type="ChEBI" id="CHEBI:49883"/>
    </cofactor>
    <text evidence="1">Binds 1 [4Fe-4S] cluster. The cluster is coordinated with 3 cysteines and an exchangeable S-adenosyl-L-methionine.</text>
</comment>
<comment type="subcellular location">
    <subcellularLocation>
        <location evidence="1">Cytoplasm</location>
    </subcellularLocation>
</comment>
<comment type="miscellaneous">
    <text evidence="1">Reaction proceeds by a ping-pong mechanism involving intermediate methylation of a conserved cysteine residue.</text>
</comment>
<comment type="similarity">
    <text evidence="1">Belongs to the radical SAM superfamily. RlmN family.</text>
</comment>
<evidence type="ECO:0000255" key="1">
    <source>
        <dbReference type="HAMAP-Rule" id="MF_01849"/>
    </source>
</evidence>
<evidence type="ECO:0000255" key="2">
    <source>
        <dbReference type="PROSITE-ProRule" id="PRU01266"/>
    </source>
</evidence>
<gene>
    <name evidence="1" type="primary">rlmN</name>
    <name type="ordered locus">Amuc_0426</name>
</gene>
<keyword id="KW-0004">4Fe-4S</keyword>
<keyword id="KW-0963">Cytoplasm</keyword>
<keyword id="KW-1015">Disulfide bond</keyword>
<keyword id="KW-0408">Iron</keyword>
<keyword id="KW-0411">Iron-sulfur</keyword>
<keyword id="KW-0479">Metal-binding</keyword>
<keyword id="KW-0489">Methyltransferase</keyword>
<keyword id="KW-1185">Reference proteome</keyword>
<keyword id="KW-0698">rRNA processing</keyword>
<keyword id="KW-0949">S-adenosyl-L-methionine</keyword>
<keyword id="KW-0808">Transferase</keyword>
<keyword id="KW-0819">tRNA processing</keyword>